<dbReference type="EMBL" id="AM748256">
    <property type="protein sequence ID" value="CAO01891.1"/>
    <property type="molecule type" value="mRNA"/>
</dbReference>
<dbReference type="EMBL" id="AM748257">
    <property type="protein sequence ID" value="CAO01892.1"/>
    <property type="molecule type" value="mRNA"/>
</dbReference>
<dbReference type="EMBL" id="AM748258">
    <property type="protein sequence ID" value="CAO01893.1"/>
    <property type="molecule type" value="mRNA"/>
</dbReference>
<dbReference type="EMBL" id="AC119951">
    <property type="status" value="NOT_ANNOTATED_CDS"/>
    <property type="molecule type" value="Genomic_DNA"/>
</dbReference>
<dbReference type="EMBL" id="AC120386">
    <property type="status" value="NOT_ANNOTATED_CDS"/>
    <property type="molecule type" value="Genomic_DNA"/>
</dbReference>
<dbReference type="CCDS" id="CCDS85720.1"/>
<dbReference type="RefSeq" id="NP_001161395.1">
    <property type="nucleotide sequence ID" value="NM_001167923.1"/>
</dbReference>
<dbReference type="SMR" id="A6H584"/>
<dbReference type="FunCoup" id="A6H584">
    <property type="interactions" value="531"/>
</dbReference>
<dbReference type="STRING" id="10090.ENSMUSP00000139398"/>
<dbReference type="GlyCosmos" id="A6H584">
    <property type="glycosylation" value="4 sites, No reported glycans"/>
</dbReference>
<dbReference type="GlyGen" id="A6H584">
    <property type="glycosylation" value="9 sites, 2 N-linked glycans (3 sites), 1 O-linked glycan (1 site)"/>
</dbReference>
<dbReference type="iPTMnet" id="A6H584"/>
<dbReference type="PhosphoSitePlus" id="A6H584"/>
<dbReference type="jPOST" id="A6H584"/>
<dbReference type="PaxDb" id="10090-ENSMUSP00000139398"/>
<dbReference type="PeptideAtlas" id="A6H584"/>
<dbReference type="ProteomicsDB" id="283546"/>
<dbReference type="DNASU" id="665033"/>
<dbReference type="GeneID" id="665033"/>
<dbReference type="KEGG" id="mmu:665033"/>
<dbReference type="AGR" id="MGI:3648134"/>
<dbReference type="CTD" id="256076"/>
<dbReference type="MGI" id="MGI:3648134">
    <property type="gene designation" value="Col6a5"/>
</dbReference>
<dbReference type="eggNOG" id="KOG3544">
    <property type="taxonomic scope" value="Eukaryota"/>
</dbReference>
<dbReference type="InParanoid" id="A6H584"/>
<dbReference type="OrthoDB" id="4473401at2759"/>
<dbReference type="PhylomeDB" id="A6H584"/>
<dbReference type="TreeFam" id="TF318242"/>
<dbReference type="Reactome" id="R-MMU-1442490">
    <property type="pathway name" value="Collagen degradation"/>
</dbReference>
<dbReference type="Reactome" id="R-MMU-1650814">
    <property type="pathway name" value="Collagen biosynthesis and modifying enzymes"/>
</dbReference>
<dbReference type="Reactome" id="R-MMU-186797">
    <property type="pathway name" value="Signaling by PDGF"/>
</dbReference>
<dbReference type="Reactome" id="R-MMU-2022090">
    <property type="pathway name" value="Assembly of collagen fibrils and other multimeric structures"/>
</dbReference>
<dbReference type="Reactome" id="R-MMU-216083">
    <property type="pathway name" value="Integrin cell surface interactions"/>
</dbReference>
<dbReference type="Reactome" id="R-MMU-3000178">
    <property type="pathway name" value="ECM proteoglycans"/>
</dbReference>
<dbReference type="Reactome" id="R-MMU-419037">
    <property type="pathway name" value="NCAM1 interactions"/>
</dbReference>
<dbReference type="Reactome" id="R-MMU-8948216">
    <property type="pathway name" value="Collagen chain trimerization"/>
</dbReference>
<dbReference type="BioGRID-ORCS" id="665033">
    <property type="hits" value="1 hit in 38 CRISPR screens"/>
</dbReference>
<dbReference type="PRO" id="PR:A6H584"/>
<dbReference type="Proteomes" id="UP000000589">
    <property type="component" value="Unplaced"/>
</dbReference>
<dbReference type="RNAct" id="A6H584">
    <property type="molecule type" value="protein"/>
</dbReference>
<dbReference type="GO" id="GO:0005589">
    <property type="term" value="C:collagen type VI trimer"/>
    <property type="evidence" value="ECO:0000304"/>
    <property type="project" value="GO_Central"/>
</dbReference>
<dbReference type="GO" id="GO:0062023">
    <property type="term" value="C:collagen-containing extracellular matrix"/>
    <property type="evidence" value="ECO:0007005"/>
    <property type="project" value="BHF-UCL"/>
</dbReference>
<dbReference type="GO" id="GO:0031012">
    <property type="term" value="C:extracellular matrix"/>
    <property type="evidence" value="ECO:0000314"/>
    <property type="project" value="MGI"/>
</dbReference>
<dbReference type="GO" id="GO:0005576">
    <property type="term" value="C:extracellular region"/>
    <property type="evidence" value="ECO:0000266"/>
    <property type="project" value="MGI"/>
</dbReference>
<dbReference type="GO" id="GO:0007155">
    <property type="term" value="P:cell adhesion"/>
    <property type="evidence" value="ECO:0007669"/>
    <property type="project" value="UniProtKB-KW"/>
</dbReference>
<dbReference type="CDD" id="cd01472">
    <property type="entry name" value="vWA_collagen"/>
    <property type="match status" value="3"/>
</dbReference>
<dbReference type="CDD" id="cd01450">
    <property type="entry name" value="vWFA_subfamily_ECM"/>
    <property type="match status" value="5"/>
</dbReference>
<dbReference type="FunFam" id="3.40.50.410:FF:000004">
    <property type="entry name" value="collagen alpha-6(VI) chain"/>
    <property type="match status" value="2"/>
</dbReference>
<dbReference type="FunFam" id="3.40.50.410:FF:000003">
    <property type="entry name" value="Collagen type VI alpha 3 chain"/>
    <property type="match status" value="2"/>
</dbReference>
<dbReference type="FunFam" id="3.40.50.410:FF:000016">
    <property type="entry name" value="Collagen type VI alpha 3 chain"/>
    <property type="match status" value="1"/>
</dbReference>
<dbReference type="FunFam" id="3.40.50.410:FF:000082">
    <property type="entry name" value="Collagen type VI alpha 5 chain"/>
    <property type="match status" value="1"/>
</dbReference>
<dbReference type="FunFam" id="3.40.50.410:FF:000044">
    <property type="entry name" value="Collagen type VI alpha 6 chain"/>
    <property type="match status" value="1"/>
</dbReference>
<dbReference type="FunFam" id="3.40.50.410:FF:000021">
    <property type="entry name" value="Collagen, type VI, alpha 3"/>
    <property type="match status" value="2"/>
</dbReference>
<dbReference type="Gene3D" id="3.40.50.410">
    <property type="entry name" value="von Willebrand factor, type A domain"/>
    <property type="match status" value="9"/>
</dbReference>
<dbReference type="InterPro" id="IPR008160">
    <property type="entry name" value="Collagen"/>
</dbReference>
<dbReference type="InterPro" id="IPR050525">
    <property type="entry name" value="ECM_Assembly_Org"/>
</dbReference>
<dbReference type="InterPro" id="IPR002035">
    <property type="entry name" value="VWF_A"/>
</dbReference>
<dbReference type="InterPro" id="IPR036465">
    <property type="entry name" value="vWFA_dom_sf"/>
</dbReference>
<dbReference type="PANTHER" id="PTHR24020">
    <property type="entry name" value="COLLAGEN ALPHA"/>
    <property type="match status" value="1"/>
</dbReference>
<dbReference type="PANTHER" id="PTHR24020:SF20">
    <property type="entry name" value="PH DOMAIN-CONTAINING PROTEIN"/>
    <property type="match status" value="1"/>
</dbReference>
<dbReference type="Pfam" id="PF01391">
    <property type="entry name" value="Collagen"/>
    <property type="match status" value="3"/>
</dbReference>
<dbReference type="Pfam" id="PF00092">
    <property type="entry name" value="VWA"/>
    <property type="match status" value="9"/>
</dbReference>
<dbReference type="PRINTS" id="PR00453">
    <property type="entry name" value="VWFADOMAIN"/>
</dbReference>
<dbReference type="SMART" id="SM00327">
    <property type="entry name" value="VWA"/>
    <property type="match status" value="9"/>
</dbReference>
<dbReference type="SUPFAM" id="SSF53300">
    <property type="entry name" value="vWA-like"/>
    <property type="match status" value="10"/>
</dbReference>
<dbReference type="PROSITE" id="PS50234">
    <property type="entry name" value="VWFA"/>
    <property type="match status" value="9"/>
</dbReference>
<gene>
    <name type="primary">Col6a5</name>
    <name type="synonym">Col29a1</name>
    <name type="synonym">Gm7455</name>
</gene>
<accession>A6H584</accession>
<accession>A6H585</accession>
<accession>A6H586</accession>
<accession>E9Q1B5</accession>
<comment type="function">
    <text evidence="1">Collagen VI acts as a cell-binding protein.</text>
</comment>
<comment type="subunit">
    <text evidence="7">Trimers composed of three different chains: alpha-1(VI), alpha-2(VI), and alpha-3(VI) or alpha-4(VI) or alpha-5(VI) or alpha-6(VI).</text>
</comment>
<comment type="subcellular location">
    <subcellularLocation>
        <location evidence="5">Secreted</location>
        <location evidence="5">Extracellular space</location>
        <location evidence="5">Extracellular matrix</location>
    </subcellularLocation>
    <text>Deposed in the extracellular matrix of skeletal muscle.</text>
</comment>
<comment type="tissue specificity">
    <text evidence="5">In newborn, it is expressed in lung, heart, kidney, muscle, brain, intestine, skin, femur, sternum and calvaria. In adult, it is widely expressed and is detected in lung, heart, kidney, spleen, muscle, ovary, uterus, brain, skin, liver and sternum.</text>
</comment>
<comment type="PTM">
    <text evidence="1">Prolines at the third position of the tripeptide repeating unit (G-X-Y) are hydroxylated in some or all of the chains.</text>
</comment>
<comment type="similarity">
    <text evidence="6">Belongs to the type VI collagen family.</text>
</comment>
<feature type="signal peptide" evidence="2">
    <location>
        <begin position="1"/>
        <end position="18"/>
    </location>
</feature>
<feature type="chain" id="PRO_5000253010" description="Collagen alpha-5(VI) chain">
    <location>
        <begin position="19"/>
        <end position="2640"/>
    </location>
</feature>
<feature type="domain" description="VWFA 1" evidence="3">
    <location>
        <begin position="30"/>
        <end position="209"/>
    </location>
</feature>
<feature type="domain" description="VWFA 2" evidence="3">
    <location>
        <begin position="268"/>
        <end position="445"/>
    </location>
</feature>
<feature type="domain" description="VWFA 3" evidence="3">
    <location>
        <begin position="474"/>
        <end position="644"/>
    </location>
</feature>
<feature type="domain" description="VWFA 4" evidence="3">
    <location>
        <begin position="660"/>
        <end position="829"/>
    </location>
</feature>
<feature type="domain" description="VWFA 5" evidence="3">
    <location>
        <begin position="846"/>
        <end position="1023"/>
    </location>
</feature>
<feature type="domain" description="VWFA 6" evidence="3">
    <location>
        <begin position="1037"/>
        <end position="1214"/>
    </location>
</feature>
<feature type="domain" description="VWFA 7" evidence="3">
    <location>
        <begin position="1226"/>
        <end position="1413"/>
    </location>
</feature>
<feature type="domain" description="Collagen-like 1" evidence="2">
    <location>
        <begin position="1426"/>
        <end position="1478"/>
    </location>
</feature>
<feature type="domain" description="Collagen-like 2" evidence="2">
    <location>
        <begin position="1474"/>
        <end position="1524"/>
    </location>
</feature>
<feature type="domain" description="Collagen-like 3" evidence="2">
    <location>
        <begin position="1557"/>
        <end position="1614"/>
    </location>
</feature>
<feature type="domain" description="Collagen-like 4" evidence="2">
    <location>
        <begin position="1632"/>
        <end position="1689"/>
    </location>
</feature>
<feature type="domain" description="Collagen-like 5" evidence="2">
    <location>
        <begin position="1706"/>
        <end position="1762"/>
    </location>
</feature>
<feature type="domain" description="VWFA 8" evidence="3">
    <location>
        <begin position="1790"/>
        <end position="1970"/>
    </location>
</feature>
<feature type="domain" description="VWFA 9" evidence="3">
    <location>
        <begin position="1996"/>
        <end position="2186"/>
    </location>
</feature>
<feature type="domain" description="VWFA 10" evidence="3">
    <location>
        <begin position="2321"/>
        <end position="2516"/>
    </location>
</feature>
<feature type="region of interest" description="Nonhelical region">
    <location>
        <begin position="19"/>
        <end position="1426"/>
    </location>
</feature>
<feature type="region of interest" description="Triple-helical region">
    <location>
        <begin position="1427"/>
        <end position="1760"/>
    </location>
</feature>
<feature type="region of interest" description="Disordered" evidence="4">
    <location>
        <begin position="1435"/>
        <end position="1761"/>
    </location>
</feature>
<feature type="region of interest" description="Nonhelical region">
    <location>
        <begin position="1761"/>
        <end position="2640"/>
    </location>
</feature>
<feature type="region of interest" description="Disordered" evidence="4">
    <location>
        <begin position="2617"/>
        <end position="2640"/>
    </location>
</feature>
<feature type="short sequence motif" description="Cell attachment site" evidence="2">
    <location>
        <begin position="1649"/>
        <end position="1651"/>
    </location>
</feature>
<feature type="short sequence motif" description="Cell attachment site" evidence="2">
    <location>
        <begin position="2216"/>
        <end position="2218"/>
    </location>
</feature>
<feature type="short sequence motif" description="Cell attachment site" evidence="2">
    <location>
        <begin position="2259"/>
        <end position="2261"/>
    </location>
</feature>
<feature type="compositionally biased region" description="Basic and acidic residues" evidence="4">
    <location>
        <begin position="1452"/>
        <end position="1464"/>
    </location>
</feature>
<feature type="compositionally biased region" description="Basic and acidic residues" evidence="4">
    <location>
        <begin position="1537"/>
        <end position="1567"/>
    </location>
</feature>
<feature type="compositionally biased region" description="Polar residues" evidence="4">
    <location>
        <begin position="1597"/>
        <end position="1609"/>
    </location>
</feature>
<feature type="compositionally biased region" description="Low complexity" evidence="4">
    <location>
        <begin position="1610"/>
        <end position="1622"/>
    </location>
</feature>
<feature type="compositionally biased region" description="Gly residues" evidence="4">
    <location>
        <begin position="1718"/>
        <end position="1727"/>
    </location>
</feature>
<feature type="compositionally biased region" description="Low complexity" evidence="4">
    <location>
        <begin position="1740"/>
        <end position="1750"/>
    </location>
</feature>
<feature type="glycosylation site" description="N-linked (GlcNAc...) asparagine" evidence="2">
    <location>
        <position position="201"/>
    </location>
</feature>
<feature type="glycosylation site" description="N-linked (GlcNAc...) asparagine" evidence="2">
    <location>
        <position position="292"/>
    </location>
</feature>
<feature type="glycosylation site" description="N-linked (GlcNAc...) asparagine" evidence="2">
    <location>
        <position position="614"/>
    </location>
</feature>
<feature type="glycosylation site" description="N-linked (GlcNAc...) asparagine" evidence="2">
    <location>
        <position position="2541"/>
    </location>
</feature>
<feature type="sequence conflict" description="In Ref. 1; CAO01892." evidence="6" ref="1">
    <original>K</original>
    <variation>E</variation>
    <location>
        <position position="1483"/>
    </location>
</feature>
<feature type="sequence conflict" description="In Ref. 1; CAO01892." evidence="6" ref="1">
    <original>LIFT</original>
    <variation>PCWK</variation>
    <location>
        <begin position="1778"/>
        <end position="1781"/>
    </location>
</feature>
<evidence type="ECO:0000250" key="1"/>
<evidence type="ECO:0000255" key="2"/>
<evidence type="ECO:0000255" key="3">
    <source>
        <dbReference type="PROSITE-ProRule" id="PRU00219"/>
    </source>
</evidence>
<evidence type="ECO:0000256" key="4">
    <source>
        <dbReference type="SAM" id="MobiDB-lite"/>
    </source>
</evidence>
<evidence type="ECO:0000269" key="5">
    <source>
    </source>
</evidence>
<evidence type="ECO:0000305" key="6"/>
<evidence type="ECO:0000305" key="7">
    <source>
    </source>
</evidence>
<sequence length="2640" mass="289575">MKLRLIAFVLILWTETLADQSPGPGPEYADVVFLVDSSNYLGIKSFPFVRTFLNRMISSLPIEANKYRVALAQYSDALHNEFQLGTFKNRNPMLNHLKKNFGFIGGSLKIGNALQEAHRTYFSAPTNGRDKKQFPPILVVLASAESEDDVEEAAKALREDGVKIISVGVQKASEENLKAMATSQFHFNLRTARDLGMFAPNMTRIIKDVTQYREGTTVDLITAVAPTTPAAPATPAAPTIPAALTTAANHVDKTVPFPTSCQKDSLADLIFLVDESVGTTQNLRDLQNFLENVTSSVDVKDNCMRLGLMSFSDRAQTISSLRSSANQSEFQQQIQKLSLQTGASNVGAAIEQMRKEGFSESSGSRKAQGVPQIAVLVTHRASDDMVREAALDLRLEGVTMFAMGIEGANNTQLEDIVSYPSRQSISTHSSYSHLESYSGNFLKKIRNEIWTQVSTRAEQMELDKTGCVDTKEADIYFLIDGSSSIRKKEFEQIQIFMSSVIDMFPIGPNKVRVGVVQYSHKNEVEFPVSRYTDGIDLKKAVFNIKQLKGLTFTGKALDFILPLIKKGKTERTDRAPCYLIVLTDGKSNDSVLEPANRLRAEQITIHAIGIGEANKTQLRQIAGKDERVNFGQNFDSLKSIKNEIVHRICSEKGCEDMKADIMFLVDSSGSIGPTNFETMKTFMKNLVGKIQIGADRSQVGVVQFSDYNREEFQLNKYSTHEEIYAAIDRMSPINRNTLTGGALTFVNEYFDLSKGGRPQVRKFLILLTDGKAQDEVGGPATALRSKSVTIFSVGVYGANRAQLEEISGDGSLVFHVENFDHLKAIESKLIFRVCALHDCKRIELLDIVFVLDHSGSIGPREQESMMNLTIHLVKKADVGRDRVQIGALTYSNHPEILFYLNTYSSGSAIAEHLRRPRDTGGETYTAKALQHSNVLFTEEHGSRLTQNVRQLMIVITDGVSHDRDKLDEAARELRDKGITIFAVGVGNANQDELETMAGKKENTVHVDNFDKLRDIYLPLQETLCNNSQETCNLPEADVIFLCDGSDMVSDSEFVTMTTFLSDLIDNFDIESQRMKIGMAQYGSRYQEIIELESSLNKTQWKSQVHSVAQSKGLPRLDFALKHVSDMFDPSVGGRRNAGVPQTLVVITSSSPRYDVTDAVKVLKDLGICVLALGIGDVYKEQLLPITGNSEKIITFRDFNKLKNVDVKKRMVREICQSCGKANCFVDVVVGFDISTHRQGQPLFQGHPRLESYLPGILEDITSIRGVSCGAGAEAQVSLAFKVNSDQEFPAKFQIYQKAAFDSLLHVTVRGPTHLDAPFLQSLWDMFEERSASRGQVLLIFSDGLQGESITLLERQSDRLREAGLDALLVVSLNTFGHDEFSSFEFGKGFDYRTQLTIGMLDLGKTLSQYLGNIAERACCCTFCKCPGIPGPHGTRGLQASKGSSGPKGSRGHRGEDGDPGRRGEIGLQGDRGVVGCPGTRGQKGVKGFSGAQGEHGEDGLDGLDGEEGFYGFRGGKGQKGDPGNQGYPGIRGAAGEDGEKGFPGDPGDPGKDSNIKGQKGEKGERGRQGITGQKGTHGRPSSKGSRGMEGQRGPQGPSGQAGNPGPQGTQGPEGLQGSQGSSGNRGGKGDKGSQGYQGPQGSPGPAGPRGDIGRPGFGGRKGEPGVPGGPGPVGPPGQRGKQGDYGIPGYGQTGRKGVKGPTGFPGDPGQKGDAGNPGIPGGPGPKGFKGLTLSQGLKGRSGLQGSQGPPGRRGPKGTAGQPIYSPCELIQFLRDHSLIFTDKCPVYPTELVFALDQSSGITERRFNETRDTITSIVSDLNIRENNCPVGARVAVVSYDSDTSYLIRGSDYHNKKHLLQLLSQIKYQVPRKARDIGNAMRFVARNVFKRMSAGTNTRRVAVFFSNGQAASRASILTATMELSALDISLAVFAYNERVFLDEAFGFDDTGTFQVIPVPPVGDYEPLEKLRRCTLCYDKCFPNTCAEEPFFPENSYMDVAFLLDNSKNIASDDFQAVKALVSSVIDSFHITSNPSASESGDRVALLSYSPSESSRRKGRVKTEFAFTTYDNQSIMKNYIYTSLQQLNGDATIGLALQWAMEGLFLGTPNPRKHKVIIVISAGENHEEKEFVKTVALRAKCQGYVVFVISLGSTQRDEMEELASYPLDHHLIQLGRMYKPDLNYIVKFLKPFIYSVRRGFNQYPPPTLKDDCRLVELERGDTLPHGLRLTAKLREVPESTISLADQELNAGKDSSFVLEDHRGDHLVYVPSQMLEPHKLVSHYGNDRESVAMASLTSEHESHGREELGLAHEPGDASLQEYYMDVAFLIDASQRVGGRNEFKEVRTLITSVLDYFHIAPAPLTSVLGDRVAVLTYSPPGYLPNTEECPVYLEFDLVTYNTVHQMKHHLQESLQQLNGDVFIGHALQWTVDNVFVGTPNLRKNKVIFIVTAGETNPLDKEVLRNASLRAKCQGYSIFVFSFGPIHNDMELEELASHPLDHHLVRLGRVHRPDLDYVIKFIKPFVHSIRRAINKYPGRDLQAKCDNLTFPGPENAGTEDSALLIPEVYRIEAGENELSGDSGSQEQHFFLLGNSHGNHSESTADLMRQLYLLLSSGELMVNDKEEPCSAETPAPVNSKQDGEDAR</sequence>
<proteinExistence type="evidence at protein level"/>
<reference key="1">
    <citation type="journal article" date="2008" name="J. Biol. Chem.">
        <title>Three novel collagen VI chains with high homology to the alpha 3 chain.</title>
        <authorList>
            <person name="Gara S.K."/>
            <person name="Grumati P."/>
            <person name="Urciuolo A."/>
            <person name="Bonaldo P."/>
            <person name="Kobbe B."/>
            <person name="Koch M."/>
            <person name="Paulsson M."/>
            <person name="Wagener R."/>
        </authorList>
    </citation>
    <scope>NUCLEOTIDE SEQUENCE [MRNA]</scope>
    <scope>SUBUNIT</scope>
    <scope>SUBCELLULAR LOCATION</scope>
    <scope>TISSUE SPECIFICITY</scope>
    <source>
        <strain>C57BL/6J</strain>
        <tissue>Lung</tissue>
    </source>
</reference>
<reference key="2">
    <citation type="journal article" date="2009" name="PLoS Biol.">
        <title>Lineage-specific biology revealed by a finished genome assembly of the mouse.</title>
        <authorList>
            <person name="Church D.M."/>
            <person name="Goodstadt L."/>
            <person name="Hillier L.W."/>
            <person name="Zody M.C."/>
            <person name="Goldstein S."/>
            <person name="She X."/>
            <person name="Bult C.J."/>
            <person name="Agarwala R."/>
            <person name="Cherry J.L."/>
            <person name="DiCuccio M."/>
            <person name="Hlavina W."/>
            <person name="Kapustin Y."/>
            <person name="Meric P."/>
            <person name="Maglott D."/>
            <person name="Birtle Z."/>
            <person name="Marques A.C."/>
            <person name="Graves T."/>
            <person name="Zhou S."/>
            <person name="Teague B."/>
            <person name="Potamousis K."/>
            <person name="Churas C."/>
            <person name="Place M."/>
            <person name="Herschleb J."/>
            <person name="Runnheim R."/>
            <person name="Forrest D."/>
            <person name="Amos-Landgraf J."/>
            <person name="Schwartz D.C."/>
            <person name="Cheng Z."/>
            <person name="Lindblad-Toh K."/>
            <person name="Eichler E.E."/>
            <person name="Ponting C.P."/>
        </authorList>
    </citation>
    <scope>NUCLEOTIDE SEQUENCE [LARGE SCALE GENOMIC DNA]</scope>
    <source>
        <strain>C57BL/6J</strain>
    </source>
</reference>
<name>CO6A5_MOUSE</name>
<organism>
    <name type="scientific">Mus musculus</name>
    <name type="common">Mouse</name>
    <dbReference type="NCBI Taxonomy" id="10090"/>
    <lineage>
        <taxon>Eukaryota</taxon>
        <taxon>Metazoa</taxon>
        <taxon>Chordata</taxon>
        <taxon>Craniata</taxon>
        <taxon>Vertebrata</taxon>
        <taxon>Euteleostomi</taxon>
        <taxon>Mammalia</taxon>
        <taxon>Eutheria</taxon>
        <taxon>Euarchontoglires</taxon>
        <taxon>Glires</taxon>
        <taxon>Rodentia</taxon>
        <taxon>Myomorpha</taxon>
        <taxon>Muroidea</taxon>
        <taxon>Muridae</taxon>
        <taxon>Murinae</taxon>
        <taxon>Mus</taxon>
        <taxon>Mus</taxon>
    </lineage>
</organism>
<protein>
    <recommendedName>
        <fullName>Collagen alpha-5(VI) chain</fullName>
    </recommendedName>
    <alternativeName>
        <fullName>Collagen alpha-1(XXIX) chain</fullName>
    </alternativeName>
</protein>
<keyword id="KW-0130">Cell adhesion</keyword>
<keyword id="KW-0176">Collagen</keyword>
<keyword id="KW-0272">Extracellular matrix</keyword>
<keyword id="KW-0325">Glycoprotein</keyword>
<keyword id="KW-0379">Hydroxylation</keyword>
<keyword id="KW-1185">Reference proteome</keyword>
<keyword id="KW-0677">Repeat</keyword>
<keyword id="KW-0964">Secreted</keyword>
<keyword id="KW-0732">Signal</keyword>